<reference key="1">
    <citation type="journal article" date="2010" name="J. Bacteriol.">
        <title>Complete genome sequence of Beijerinckia indica subsp. indica.</title>
        <authorList>
            <person name="Tamas I."/>
            <person name="Dedysh S.N."/>
            <person name="Liesack W."/>
            <person name="Stott M.B."/>
            <person name="Alam M."/>
            <person name="Murrell J.C."/>
            <person name="Dunfield P.F."/>
        </authorList>
    </citation>
    <scope>NUCLEOTIDE SEQUENCE [LARGE SCALE GENOMIC DNA]</scope>
    <source>
        <strain>ATCC 9039 / DSM 1715 / NCIMB 8712</strain>
    </source>
</reference>
<comment type="function">
    <text evidence="1">Channel that opens in response to stretch forces in the membrane lipid bilayer. May participate in the regulation of osmotic pressure changes within the cell.</text>
</comment>
<comment type="subunit">
    <text evidence="1">Homopentamer.</text>
</comment>
<comment type="subcellular location">
    <subcellularLocation>
        <location evidence="1">Cell inner membrane</location>
        <topology evidence="1">Multi-pass membrane protein</topology>
    </subcellularLocation>
</comment>
<comment type="similarity">
    <text evidence="1">Belongs to the MscL family.</text>
</comment>
<organism>
    <name type="scientific">Beijerinckia indica subsp. indica (strain ATCC 9039 / DSM 1715 / NCIMB 8712)</name>
    <dbReference type="NCBI Taxonomy" id="395963"/>
    <lineage>
        <taxon>Bacteria</taxon>
        <taxon>Pseudomonadati</taxon>
        <taxon>Pseudomonadota</taxon>
        <taxon>Alphaproteobacteria</taxon>
        <taxon>Hyphomicrobiales</taxon>
        <taxon>Beijerinckiaceae</taxon>
        <taxon>Beijerinckia</taxon>
    </lineage>
</organism>
<protein>
    <recommendedName>
        <fullName evidence="1">Large-conductance mechanosensitive channel</fullName>
    </recommendedName>
</protein>
<feature type="chain" id="PRO_1000094878" description="Large-conductance mechanosensitive channel">
    <location>
        <begin position="1"/>
        <end position="141"/>
    </location>
</feature>
<feature type="transmembrane region" description="Helical" evidence="1">
    <location>
        <begin position="8"/>
        <end position="28"/>
    </location>
</feature>
<feature type="transmembrane region" description="Helical" evidence="1">
    <location>
        <begin position="38"/>
        <end position="58"/>
    </location>
</feature>
<feature type="transmembrane region" description="Helical" evidence="1">
    <location>
        <begin position="80"/>
        <end position="100"/>
    </location>
</feature>
<gene>
    <name evidence="1" type="primary">mscL</name>
    <name type="ordered locus">Bind_3208</name>
</gene>
<evidence type="ECO:0000255" key="1">
    <source>
        <dbReference type="HAMAP-Rule" id="MF_00115"/>
    </source>
</evidence>
<sequence length="141" mass="15573">MFKEFREFALKGNVVDLAIGVIIGAAFGRIIDSLVNDIIMPFFGALGGLDFSNYFFPLTKGVTASSLAEARRQGAVLAWGNFLTVAVNFLIIAFVLFLIVRSINTFRKRVLKENLEVTPPAKPQDVVVLEEIRDLIAARRA</sequence>
<name>MSCL_BEII9</name>
<proteinExistence type="inferred from homology"/>
<keyword id="KW-0997">Cell inner membrane</keyword>
<keyword id="KW-1003">Cell membrane</keyword>
<keyword id="KW-0407">Ion channel</keyword>
<keyword id="KW-0406">Ion transport</keyword>
<keyword id="KW-0472">Membrane</keyword>
<keyword id="KW-1185">Reference proteome</keyword>
<keyword id="KW-0812">Transmembrane</keyword>
<keyword id="KW-1133">Transmembrane helix</keyword>
<keyword id="KW-0813">Transport</keyword>
<dbReference type="EMBL" id="CP001016">
    <property type="protein sequence ID" value="ACB96768.1"/>
    <property type="molecule type" value="Genomic_DNA"/>
</dbReference>
<dbReference type="RefSeq" id="WP_012386116.1">
    <property type="nucleotide sequence ID" value="NC_010581.1"/>
</dbReference>
<dbReference type="SMR" id="B2ID03"/>
<dbReference type="STRING" id="395963.Bind_3208"/>
<dbReference type="KEGG" id="bid:Bind_3208"/>
<dbReference type="eggNOG" id="COG1970">
    <property type="taxonomic scope" value="Bacteria"/>
</dbReference>
<dbReference type="HOGENOM" id="CLU_095787_0_1_5"/>
<dbReference type="OrthoDB" id="9810350at2"/>
<dbReference type="Proteomes" id="UP000001695">
    <property type="component" value="Chromosome"/>
</dbReference>
<dbReference type="GO" id="GO:0005886">
    <property type="term" value="C:plasma membrane"/>
    <property type="evidence" value="ECO:0007669"/>
    <property type="project" value="UniProtKB-SubCell"/>
</dbReference>
<dbReference type="GO" id="GO:0008381">
    <property type="term" value="F:mechanosensitive monoatomic ion channel activity"/>
    <property type="evidence" value="ECO:0007669"/>
    <property type="project" value="UniProtKB-UniRule"/>
</dbReference>
<dbReference type="Gene3D" id="1.10.1200.120">
    <property type="entry name" value="Large-conductance mechanosensitive channel, MscL, domain 1"/>
    <property type="match status" value="1"/>
</dbReference>
<dbReference type="HAMAP" id="MF_00115">
    <property type="entry name" value="MscL"/>
    <property type="match status" value="1"/>
</dbReference>
<dbReference type="InterPro" id="IPR019823">
    <property type="entry name" value="Mechanosensitive_channel_CS"/>
</dbReference>
<dbReference type="InterPro" id="IPR001185">
    <property type="entry name" value="MS_channel"/>
</dbReference>
<dbReference type="InterPro" id="IPR037673">
    <property type="entry name" value="MSC/AndL"/>
</dbReference>
<dbReference type="InterPro" id="IPR036019">
    <property type="entry name" value="MscL_channel"/>
</dbReference>
<dbReference type="NCBIfam" id="TIGR00220">
    <property type="entry name" value="mscL"/>
    <property type="match status" value="1"/>
</dbReference>
<dbReference type="NCBIfam" id="NF010557">
    <property type="entry name" value="PRK13952.1"/>
    <property type="match status" value="1"/>
</dbReference>
<dbReference type="PANTHER" id="PTHR30266:SF2">
    <property type="entry name" value="LARGE-CONDUCTANCE MECHANOSENSITIVE CHANNEL"/>
    <property type="match status" value="1"/>
</dbReference>
<dbReference type="PANTHER" id="PTHR30266">
    <property type="entry name" value="MECHANOSENSITIVE CHANNEL MSCL"/>
    <property type="match status" value="1"/>
</dbReference>
<dbReference type="Pfam" id="PF01741">
    <property type="entry name" value="MscL"/>
    <property type="match status" value="1"/>
</dbReference>
<dbReference type="PRINTS" id="PR01264">
    <property type="entry name" value="MECHCHANNEL"/>
</dbReference>
<dbReference type="SUPFAM" id="SSF81330">
    <property type="entry name" value="Gated mechanosensitive channel"/>
    <property type="match status" value="1"/>
</dbReference>
<dbReference type="PROSITE" id="PS01327">
    <property type="entry name" value="MSCL"/>
    <property type="match status" value="1"/>
</dbReference>
<accession>B2ID03</accession>